<feature type="chain" id="PRO_0000379281" description="ATP-dependent helicase/nuclease subunit A">
    <location>
        <begin position="1"/>
        <end position="1337"/>
    </location>
</feature>
<feature type="domain" description="UvrD-like helicase ATP-binding" evidence="1">
    <location>
        <begin position="3"/>
        <end position="484"/>
    </location>
</feature>
<feature type="domain" description="UvrD-like helicase C-terminal" evidence="1">
    <location>
        <begin position="522"/>
        <end position="867"/>
    </location>
</feature>
<feature type="binding site" evidence="1">
    <location>
        <begin position="24"/>
        <end position="31"/>
    </location>
    <ligand>
        <name>ATP</name>
        <dbReference type="ChEBI" id="CHEBI:30616"/>
    </ligand>
</feature>
<proteinExistence type="inferred from homology"/>
<sequence>MVFTPSKEQEPAINDRQKDILVSASAGSGKTAVLVERVIQLMETGLSKDAKPSERPNIDDILMVTFTTDAAKNMRDRIRRRLVGATDEHMKAQVARLALANISTIHSFCEQLIKRYYYVIDLDPQFRLIDDAEQQLLKEQAWQATLDDWVANPDQVGALHQLIDNFGAGNLESVVQALDTEADAQPHPSDWLAGLSGLYQFEEGADPRQSAFFKRLLEPLVGPQLKELRDQWAALGEVGPARFAEQVEEDLAKLATTVDDQGHLLGSWDSLAQTLNKKNFAPKLRKRKDDDDPELLDELGVQRGGLRDQLGDLHDTYFFQSAADLVKYGQKAGALIEILTRVATDFRCHYQIIKQDRRLLDFSDLEHYAYAILTGENINPKVTWSDEEARAKRQAAAQVQAELQRHYKEIMIDEYQDTNRLQDDLLRLLHKSGQNHRFMVGDMKQSIYRFRQADPTLFKDYYDQFSADGQSSEALDLSDNYRSRHEVTDLVNLIFEQLMDQQLGEMVYDDKASLKPKADWGADRDQASPATPELLLFDGGVKKTTANPTGEDAIVVRQPEDKVASEVWLIGQRIRELLAKETILDPETKRVRPITPGDIAILSRAKRIHSVIAEQFAKLNLPVMVHGVENYFKATEIRVVMSLLKVIDNPYQDVPLAAVLRSPLIQVAPEVAAKFGLSQGENRIGFTEPELAYLKVNSTSKDFFGVVQQNYYAWRDQEVEAVENHDALTEEELAERVAGDPAGLATKEELGVNCGLIYLKLARFFELRDHLRRVAQRRPLVDLIWTIYQATGYLDYVGGMSGGPQRQANLHALYERASGYEESGFKGLYQFIHFIEQMQKKNDDLGEATTALAGDAINVMTIHKSKGLQFPIVFLVETTHQFQADRDPVTIEPQAGLGFTYVDSTANETMRVKHPLVQQAALKEKKKRQDRAEEMRLLYVALTRAEQRLFITGYVKDADLTKKMDKWNRAFDSASPLLTTTTRLKGQSMLDWIMMTLVRTANFPTLREGVEAAATPLRGLTKAAYQIKLQNADQVQAALNTPLDLHPNATAEQATPAAATSRQFKADLERVLNFTYPDQVATQTTAFQAVSTVREAFARQDPTNLEMGRLEIDRDQIKEAGAYLAPEERAFENPAFITGASDQEPTGTAIGTATHLVFQKLPLTEPLDEGAVRALIKSLTESGLIDNPQVAAGIDVAGVVSFYQTGLGQVITAHPEQVHREVPFSMLLSAHDLFSGIGATDDSEVLIHGIIDGYVQHDDQIDLFDYKTDRISQAHPEEDLQELADKYSGQLVLYADALTKMTGVPLEKIHRHLYFTRAKRVVTLSAPPSSHEPKEEA</sequence>
<name>ADDA_LIMF3</name>
<reference key="1">
    <citation type="journal article" date="2008" name="DNA Res.">
        <title>Comparative genome analysis of Lactobacillus reuteri and Lactobacillus fermentum reveal a genomic island for reuterin and cobalamin production.</title>
        <authorList>
            <person name="Morita H."/>
            <person name="Toh H."/>
            <person name="Fukuda S."/>
            <person name="Horikawa H."/>
            <person name="Oshima K."/>
            <person name="Suzuki T."/>
            <person name="Murakami M."/>
            <person name="Hisamatsu S."/>
            <person name="Kato Y."/>
            <person name="Takizawa T."/>
            <person name="Fukuoka H."/>
            <person name="Yoshimura T."/>
            <person name="Itoh K."/>
            <person name="O'Sullivan D.J."/>
            <person name="McKay L.L."/>
            <person name="Ohno H."/>
            <person name="Kikuchi J."/>
            <person name="Masaoka T."/>
            <person name="Hattori M."/>
        </authorList>
    </citation>
    <scope>NUCLEOTIDE SEQUENCE [LARGE SCALE GENOMIC DNA]</scope>
    <source>
        <strain>NBRC 3956 / LMG 18251</strain>
    </source>
</reference>
<protein>
    <recommendedName>
        <fullName evidence="1">ATP-dependent helicase/nuclease subunit A</fullName>
        <ecNumber evidence="1">3.1.-.-</ecNumber>
        <ecNumber evidence="1">5.6.2.4</ecNumber>
    </recommendedName>
    <alternativeName>
        <fullName evidence="1">ATP-dependent helicase/nuclease AddA</fullName>
    </alternativeName>
    <alternativeName>
        <fullName evidence="1">DNA 3'-5' helicase AddA</fullName>
    </alternativeName>
</protein>
<evidence type="ECO:0000255" key="1">
    <source>
        <dbReference type="HAMAP-Rule" id="MF_01451"/>
    </source>
</evidence>
<keyword id="KW-0067">ATP-binding</keyword>
<keyword id="KW-0227">DNA damage</keyword>
<keyword id="KW-0234">DNA repair</keyword>
<keyword id="KW-0238">DNA-binding</keyword>
<keyword id="KW-0269">Exonuclease</keyword>
<keyword id="KW-0347">Helicase</keyword>
<keyword id="KW-0378">Hydrolase</keyword>
<keyword id="KW-0413">Isomerase</keyword>
<keyword id="KW-0540">Nuclease</keyword>
<keyword id="KW-0547">Nucleotide-binding</keyword>
<keyword id="KW-1185">Reference proteome</keyword>
<dbReference type="EC" id="3.1.-.-" evidence="1"/>
<dbReference type="EC" id="5.6.2.4" evidence="1"/>
<dbReference type="EMBL" id="AP008937">
    <property type="protein sequence ID" value="BAG26373.1"/>
    <property type="molecule type" value="Genomic_DNA"/>
</dbReference>
<dbReference type="RefSeq" id="WP_012390674.1">
    <property type="nucleotide sequence ID" value="NC_010610.1"/>
</dbReference>
<dbReference type="SMR" id="B2GEY4"/>
<dbReference type="KEGG" id="lfe:LAF_0037"/>
<dbReference type="PATRIC" id="fig|334390.5.peg.36"/>
<dbReference type="eggNOG" id="COG1074">
    <property type="taxonomic scope" value="Bacteria"/>
</dbReference>
<dbReference type="HOGENOM" id="CLU_001114_3_1_9"/>
<dbReference type="Proteomes" id="UP000001697">
    <property type="component" value="Chromosome"/>
</dbReference>
<dbReference type="GO" id="GO:0005829">
    <property type="term" value="C:cytosol"/>
    <property type="evidence" value="ECO:0007669"/>
    <property type="project" value="TreeGrafter"/>
</dbReference>
<dbReference type="GO" id="GO:0033202">
    <property type="term" value="C:DNA helicase complex"/>
    <property type="evidence" value="ECO:0007669"/>
    <property type="project" value="TreeGrafter"/>
</dbReference>
<dbReference type="GO" id="GO:0043138">
    <property type="term" value="F:3'-5' DNA helicase activity"/>
    <property type="evidence" value="ECO:0007669"/>
    <property type="project" value="UniProtKB-UniRule"/>
</dbReference>
<dbReference type="GO" id="GO:0008408">
    <property type="term" value="F:3'-5' exonuclease activity"/>
    <property type="evidence" value="ECO:0007669"/>
    <property type="project" value="UniProtKB-UniRule"/>
</dbReference>
<dbReference type="GO" id="GO:0005524">
    <property type="term" value="F:ATP binding"/>
    <property type="evidence" value="ECO:0007669"/>
    <property type="project" value="UniProtKB-UniRule"/>
</dbReference>
<dbReference type="GO" id="GO:0016887">
    <property type="term" value="F:ATP hydrolysis activity"/>
    <property type="evidence" value="ECO:0007669"/>
    <property type="project" value="RHEA"/>
</dbReference>
<dbReference type="GO" id="GO:0003690">
    <property type="term" value="F:double-stranded DNA binding"/>
    <property type="evidence" value="ECO:0007669"/>
    <property type="project" value="UniProtKB-UniRule"/>
</dbReference>
<dbReference type="GO" id="GO:0000724">
    <property type="term" value="P:double-strand break repair via homologous recombination"/>
    <property type="evidence" value="ECO:0007669"/>
    <property type="project" value="UniProtKB-UniRule"/>
</dbReference>
<dbReference type="Gene3D" id="3.90.320.10">
    <property type="match status" value="1"/>
</dbReference>
<dbReference type="Gene3D" id="6.10.250.2380">
    <property type="match status" value="1"/>
</dbReference>
<dbReference type="Gene3D" id="3.40.50.300">
    <property type="entry name" value="P-loop containing nucleotide triphosphate hydrolases"/>
    <property type="match status" value="4"/>
</dbReference>
<dbReference type="Gene3D" id="1.10.486.10">
    <property type="entry name" value="PCRA, domain 4"/>
    <property type="match status" value="1"/>
</dbReference>
<dbReference type="HAMAP" id="MF_01451">
    <property type="entry name" value="AddA"/>
    <property type="match status" value="1"/>
</dbReference>
<dbReference type="InterPro" id="IPR014152">
    <property type="entry name" value="AddA"/>
</dbReference>
<dbReference type="InterPro" id="IPR014017">
    <property type="entry name" value="DNA_helicase_UvrD-like_C"/>
</dbReference>
<dbReference type="InterPro" id="IPR000212">
    <property type="entry name" value="DNA_helicase_UvrD/REP"/>
</dbReference>
<dbReference type="InterPro" id="IPR027417">
    <property type="entry name" value="P-loop_NTPase"/>
</dbReference>
<dbReference type="InterPro" id="IPR011604">
    <property type="entry name" value="PDDEXK-like_dom_sf"/>
</dbReference>
<dbReference type="InterPro" id="IPR038726">
    <property type="entry name" value="PDDEXK_AddAB-type"/>
</dbReference>
<dbReference type="InterPro" id="IPR011335">
    <property type="entry name" value="Restrct_endonuc-II-like"/>
</dbReference>
<dbReference type="InterPro" id="IPR014016">
    <property type="entry name" value="UvrD-like_ATP-bd"/>
</dbReference>
<dbReference type="NCBIfam" id="TIGR02785">
    <property type="entry name" value="addA_Gpos"/>
    <property type="match status" value="1"/>
</dbReference>
<dbReference type="PANTHER" id="PTHR11070:SF48">
    <property type="entry name" value="ATP-DEPENDENT HELICASE_NUCLEASE SUBUNIT A"/>
    <property type="match status" value="1"/>
</dbReference>
<dbReference type="PANTHER" id="PTHR11070">
    <property type="entry name" value="UVRD / RECB / PCRA DNA HELICASE FAMILY MEMBER"/>
    <property type="match status" value="1"/>
</dbReference>
<dbReference type="Pfam" id="PF12705">
    <property type="entry name" value="PDDEXK_1"/>
    <property type="match status" value="1"/>
</dbReference>
<dbReference type="Pfam" id="PF00580">
    <property type="entry name" value="UvrD-helicase"/>
    <property type="match status" value="2"/>
</dbReference>
<dbReference type="Pfam" id="PF13361">
    <property type="entry name" value="UvrD_C"/>
    <property type="match status" value="1"/>
</dbReference>
<dbReference type="SUPFAM" id="SSF52540">
    <property type="entry name" value="P-loop containing nucleoside triphosphate hydrolases"/>
    <property type="match status" value="1"/>
</dbReference>
<dbReference type="SUPFAM" id="SSF52980">
    <property type="entry name" value="Restriction endonuclease-like"/>
    <property type="match status" value="1"/>
</dbReference>
<dbReference type="PROSITE" id="PS51198">
    <property type="entry name" value="UVRD_HELICASE_ATP_BIND"/>
    <property type="match status" value="1"/>
</dbReference>
<dbReference type="PROSITE" id="PS51217">
    <property type="entry name" value="UVRD_HELICASE_CTER"/>
    <property type="match status" value="1"/>
</dbReference>
<comment type="function">
    <text evidence="1">The heterodimer acts as both an ATP-dependent DNA helicase and an ATP-dependent, dual-direction single-stranded exonuclease. Recognizes the chi site generating a DNA molecule suitable for the initiation of homologous recombination. The AddA nuclease domain is required for chi fragment generation; this subunit has the helicase and 3' -&gt; 5' nuclease activities.</text>
</comment>
<comment type="catalytic activity">
    <reaction evidence="1">
        <text>Couples ATP hydrolysis with the unwinding of duplex DNA by translocating in the 3'-5' direction.</text>
        <dbReference type="EC" id="5.6.2.4"/>
    </reaction>
</comment>
<comment type="catalytic activity">
    <reaction evidence="1">
        <text>ATP + H2O = ADP + phosphate + H(+)</text>
        <dbReference type="Rhea" id="RHEA:13065"/>
        <dbReference type="ChEBI" id="CHEBI:15377"/>
        <dbReference type="ChEBI" id="CHEBI:15378"/>
        <dbReference type="ChEBI" id="CHEBI:30616"/>
        <dbReference type="ChEBI" id="CHEBI:43474"/>
        <dbReference type="ChEBI" id="CHEBI:456216"/>
        <dbReference type="EC" id="5.6.2.4"/>
    </reaction>
</comment>
<comment type="cofactor">
    <cofactor evidence="1">
        <name>Mg(2+)</name>
        <dbReference type="ChEBI" id="CHEBI:18420"/>
    </cofactor>
</comment>
<comment type="subunit">
    <text evidence="1">Heterodimer of AddA and AddB/RexB.</text>
</comment>
<comment type="similarity">
    <text evidence="1">Belongs to the helicase family. AddA subfamily.</text>
</comment>
<organism>
    <name type="scientific">Limosilactobacillus fermentum (strain NBRC 3956 / LMG 18251)</name>
    <name type="common">Lactobacillus fermentum</name>
    <dbReference type="NCBI Taxonomy" id="334390"/>
    <lineage>
        <taxon>Bacteria</taxon>
        <taxon>Bacillati</taxon>
        <taxon>Bacillota</taxon>
        <taxon>Bacilli</taxon>
        <taxon>Lactobacillales</taxon>
        <taxon>Lactobacillaceae</taxon>
        <taxon>Limosilactobacillus</taxon>
    </lineage>
</organism>
<gene>
    <name evidence="1" type="primary">addA</name>
    <name type="ordered locus">LAF_0037</name>
</gene>
<accession>B2GEY4</accession>